<comment type="similarity">
    <text evidence="2">Belongs to the bacterial ribosomal protein bL33 family.</text>
</comment>
<organism>
    <name type="scientific">Mycobacterium leprae (strain TN)</name>
    <dbReference type="NCBI Taxonomy" id="272631"/>
    <lineage>
        <taxon>Bacteria</taxon>
        <taxon>Bacillati</taxon>
        <taxon>Actinomycetota</taxon>
        <taxon>Actinomycetes</taxon>
        <taxon>Mycobacteriales</taxon>
        <taxon>Mycobacteriaceae</taxon>
        <taxon>Mycobacterium</taxon>
    </lineage>
</organism>
<accession>Q9CBJ5</accession>
<keyword id="KW-1185">Reference proteome</keyword>
<keyword id="KW-0687">Ribonucleoprotein</keyword>
<keyword id="KW-0689">Ribosomal protein</keyword>
<proteinExistence type="inferred from homology"/>
<feature type="chain" id="PRO_0000170189" description="Large ribosomal subunit protein bL33">
    <location>
        <begin position="1"/>
        <end position="55"/>
    </location>
</feature>
<reference key="1">
    <citation type="journal article" date="2001" name="Nature">
        <title>Massive gene decay in the leprosy bacillus.</title>
        <authorList>
            <person name="Cole S.T."/>
            <person name="Eiglmeier K."/>
            <person name="Parkhill J."/>
            <person name="James K.D."/>
            <person name="Thomson N.R."/>
            <person name="Wheeler P.R."/>
            <person name="Honore N."/>
            <person name="Garnier T."/>
            <person name="Churcher C.M."/>
            <person name="Harris D.E."/>
            <person name="Mungall K.L."/>
            <person name="Basham D."/>
            <person name="Brown D."/>
            <person name="Chillingworth T."/>
            <person name="Connor R."/>
            <person name="Davies R.M."/>
            <person name="Devlin K."/>
            <person name="Duthoy S."/>
            <person name="Feltwell T."/>
            <person name="Fraser A."/>
            <person name="Hamlin N."/>
            <person name="Holroyd S."/>
            <person name="Hornsby T."/>
            <person name="Jagels K."/>
            <person name="Lacroix C."/>
            <person name="Maclean J."/>
            <person name="Moule S."/>
            <person name="Murphy L.D."/>
            <person name="Oliver K."/>
            <person name="Quail M.A."/>
            <person name="Rajandream M.A."/>
            <person name="Rutherford K.M."/>
            <person name="Rutter S."/>
            <person name="Seeger K."/>
            <person name="Simon S."/>
            <person name="Simmonds M."/>
            <person name="Skelton J."/>
            <person name="Squares R."/>
            <person name="Squares S."/>
            <person name="Stevens K."/>
            <person name="Taylor K."/>
            <person name="Whitehead S."/>
            <person name="Woodward J.R."/>
            <person name="Barrell B.G."/>
        </authorList>
    </citation>
    <scope>NUCLEOTIDE SEQUENCE [LARGE SCALE GENOMIC DNA]</scope>
    <source>
        <strain>TN</strain>
    </source>
</reference>
<protein>
    <recommendedName>
        <fullName evidence="1">Large ribosomal subunit protein bL33</fullName>
    </recommendedName>
    <alternativeName>
        <fullName>50S ribosomal protein L33</fullName>
    </alternativeName>
</protein>
<sequence>MASSTDVRPKITMACEVCKHRNYITKKNRRNDPDRMELKKFCRNCGKHQSHRETR</sequence>
<name>RL33_MYCLE</name>
<dbReference type="EMBL" id="AL583923">
    <property type="protein sequence ID" value="CAC30865.1"/>
    <property type="molecule type" value="Genomic_DNA"/>
</dbReference>
<dbReference type="PIR" id="A87148">
    <property type="entry name" value="A87148"/>
</dbReference>
<dbReference type="RefSeq" id="NP_302288.1">
    <property type="nucleotide sequence ID" value="NC_002677.1"/>
</dbReference>
<dbReference type="RefSeq" id="WP_010908609.1">
    <property type="nucleotide sequence ID" value="NC_002677.1"/>
</dbReference>
<dbReference type="SMR" id="Q9CBJ5"/>
<dbReference type="STRING" id="272631.gene:17575760"/>
<dbReference type="KEGG" id="mle:ML1911"/>
<dbReference type="PATRIC" id="fig|272631.5.peg.3619"/>
<dbReference type="Leproma" id="ML1911"/>
<dbReference type="eggNOG" id="COG0267">
    <property type="taxonomic scope" value="Bacteria"/>
</dbReference>
<dbReference type="HOGENOM" id="CLU_190949_0_2_11"/>
<dbReference type="OrthoDB" id="21586at2"/>
<dbReference type="Proteomes" id="UP000000806">
    <property type="component" value="Chromosome"/>
</dbReference>
<dbReference type="GO" id="GO:0005737">
    <property type="term" value="C:cytoplasm"/>
    <property type="evidence" value="ECO:0007669"/>
    <property type="project" value="UniProtKB-ARBA"/>
</dbReference>
<dbReference type="GO" id="GO:1990904">
    <property type="term" value="C:ribonucleoprotein complex"/>
    <property type="evidence" value="ECO:0007669"/>
    <property type="project" value="UniProtKB-KW"/>
</dbReference>
<dbReference type="GO" id="GO:0005840">
    <property type="term" value="C:ribosome"/>
    <property type="evidence" value="ECO:0007669"/>
    <property type="project" value="UniProtKB-KW"/>
</dbReference>
<dbReference type="GO" id="GO:0003735">
    <property type="term" value="F:structural constituent of ribosome"/>
    <property type="evidence" value="ECO:0007669"/>
    <property type="project" value="InterPro"/>
</dbReference>
<dbReference type="GO" id="GO:0006412">
    <property type="term" value="P:translation"/>
    <property type="evidence" value="ECO:0007669"/>
    <property type="project" value="UniProtKB-UniRule"/>
</dbReference>
<dbReference type="Gene3D" id="2.20.28.120">
    <property type="entry name" value="Ribosomal protein L33"/>
    <property type="match status" value="1"/>
</dbReference>
<dbReference type="HAMAP" id="MF_00294">
    <property type="entry name" value="Ribosomal_bL33"/>
    <property type="match status" value="1"/>
</dbReference>
<dbReference type="InterPro" id="IPR001705">
    <property type="entry name" value="Ribosomal_bL33"/>
</dbReference>
<dbReference type="InterPro" id="IPR018264">
    <property type="entry name" value="Ribosomal_bL33_CS"/>
</dbReference>
<dbReference type="InterPro" id="IPR038584">
    <property type="entry name" value="Ribosomal_bL33_sf"/>
</dbReference>
<dbReference type="InterPro" id="IPR011332">
    <property type="entry name" value="Ribosomal_zn-bd"/>
</dbReference>
<dbReference type="NCBIfam" id="NF001764">
    <property type="entry name" value="PRK00504.1"/>
    <property type="match status" value="1"/>
</dbReference>
<dbReference type="NCBIfam" id="NF001860">
    <property type="entry name" value="PRK00595.1"/>
    <property type="match status" value="1"/>
</dbReference>
<dbReference type="NCBIfam" id="TIGR01023">
    <property type="entry name" value="rpmG_bact"/>
    <property type="match status" value="1"/>
</dbReference>
<dbReference type="PANTHER" id="PTHR43168">
    <property type="entry name" value="50S RIBOSOMAL PROTEIN L33, CHLOROPLASTIC"/>
    <property type="match status" value="1"/>
</dbReference>
<dbReference type="PANTHER" id="PTHR43168:SF2">
    <property type="entry name" value="LARGE RIBOSOMAL SUBUNIT PROTEIN BL33C"/>
    <property type="match status" value="1"/>
</dbReference>
<dbReference type="Pfam" id="PF00471">
    <property type="entry name" value="Ribosomal_L33"/>
    <property type="match status" value="1"/>
</dbReference>
<dbReference type="SUPFAM" id="SSF57829">
    <property type="entry name" value="Zn-binding ribosomal proteins"/>
    <property type="match status" value="1"/>
</dbReference>
<dbReference type="PROSITE" id="PS00582">
    <property type="entry name" value="RIBOSOMAL_L33"/>
    <property type="match status" value="1"/>
</dbReference>
<evidence type="ECO:0000255" key="1">
    <source>
        <dbReference type="HAMAP-Rule" id="MF_00294"/>
    </source>
</evidence>
<evidence type="ECO:0000305" key="2"/>
<gene>
    <name evidence="1" type="primary">rpmG</name>
    <name type="ordered locus">ML1911</name>
</gene>